<dbReference type="EMBL" id="BC092621">
    <property type="protein sequence ID" value="AAH92621.1"/>
    <property type="molecule type" value="mRNA"/>
</dbReference>
<dbReference type="RefSeq" id="NP_001096824.1">
    <property type="nucleotide sequence ID" value="NM_001103354.2"/>
</dbReference>
<dbReference type="RefSeq" id="XP_006243126.1">
    <property type="nucleotide sequence ID" value="XM_006243064.5"/>
</dbReference>
<dbReference type="RefSeq" id="XP_008764421.1">
    <property type="nucleotide sequence ID" value="XM_008766199.4"/>
</dbReference>
<dbReference type="RefSeq" id="XP_017450885.1">
    <property type="nucleotide sequence ID" value="XM_017595396.3"/>
</dbReference>
<dbReference type="SMR" id="Q569A3"/>
<dbReference type="FunCoup" id="Q569A3">
    <property type="interactions" value="268"/>
</dbReference>
<dbReference type="GlyGen" id="Q569A3">
    <property type="glycosylation" value="2 sites"/>
</dbReference>
<dbReference type="PhosphoSitePlus" id="Q569A3"/>
<dbReference type="PaxDb" id="10116-ENSRNOP00000062036"/>
<dbReference type="Ensembl" id="ENSRNOT00000028972.4">
    <property type="protein sequence ID" value="ENSRNOP00000062036.1"/>
    <property type="gene ID" value="ENSRNOG00000025463.4"/>
</dbReference>
<dbReference type="Ensembl" id="ENSRNOT00000114873.1">
    <property type="protein sequence ID" value="ENSRNOP00000094101.1"/>
    <property type="gene ID" value="ENSRNOG00000025463.4"/>
</dbReference>
<dbReference type="GeneID" id="100125362"/>
<dbReference type="KEGG" id="rno:100125362"/>
<dbReference type="UCSC" id="RGD:1642426">
    <property type="organism name" value="rat"/>
</dbReference>
<dbReference type="AGR" id="RGD:1642426"/>
<dbReference type="CTD" id="100125362"/>
<dbReference type="RGD" id="1642426">
    <property type="gene designation" value="C8h11orf87"/>
</dbReference>
<dbReference type="eggNOG" id="ENOG502S981">
    <property type="taxonomic scope" value="Eukaryota"/>
</dbReference>
<dbReference type="GeneTree" id="ENSGT00390000012905"/>
<dbReference type="HOGENOM" id="CLU_074982_0_0_1"/>
<dbReference type="InParanoid" id="Q569A3"/>
<dbReference type="OMA" id="YERDHCT"/>
<dbReference type="OrthoDB" id="9943854at2759"/>
<dbReference type="PhylomeDB" id="Q569A3"/>
<dbReference type="TreeFam" id="TF336990"/>
<dbReference type="PRO" id="PR:Q569A3"/>
<dbReference type="Proteomes" id="UP000002494">
    <property type="component" value="Chromosome 8"/>
</dbReference>
<dbReference type="Bgee" id="ENSRNOG00000025463">
    <property type="expression patterns" value="Expressed in frontal cortex and 2 other cell types or tissues"/>
</dbReference>
<dbReference type="GO" id="GO:0016020">
    <property type="term" value="C:membrane"/>
    <property type="evidence" value="ECO:0007669"/>
    <property type="project" value="UniProtKB-SubCell"/>
</dbReference>
<dbReference type="InterPro" id="IPR037670">
    <property type="entry name" value="C11orf87"/>
</dbReference>
<dbReference type="PANTHER" id="PTHR31870:SF2">
    <property type="entry name" value="CHROMOSOME 11 OPEN READING FRAME 87"/>
    <property type="match status" value="1"/>
</dbReference>
<dbReference type="PANTHER" id="PTHR31870">
    <property type="entry name" value="SI:DKEY-183I3.9-RELATED"/>
    <property type="match status" value="1"/>
</dbReference>
<accession>Q569A3</accession>
<sequence length="196" mass="20530">MSARAPKELRLALPPCLLNRTFASHNASGGSNAGIRSSGAGGGTCITQVGQQLFQSFSSTLVLIVLVTLIFCLIVLSLSTFHIHKRRMKKRKMQRAQEEYERDHCSGSHGGGGLPRAGVQAPTHGKETRLERQPRDSAFCTPSNATSSSSSSPGLLCQGPCAPPPPPPVPSPHGAHAASSCLDTPGEGLLQTVVLS</sequence>
<proteinExistence type="evidence at transcript level"/>
<organism>
    <name type="scientific">Rattus norvegicus</name>
    <name type="common">Rat</name>
    <dbReference type="NCBI Taxonomy" id="10116"/>
    <lineage>
        <taxon>Eukaryota</taxon>
        <taxon>Metazoa</taxon>
        <taxon>Chordata</taxon>
        <taxon>Craniata</taxon>
        <taxon>Vertebrata</taxon>
        <taxon>Euteleostomi</taxon>
        <taxon>Mammalia</taxon>
        <taxon>Eutheria</taxon>
        <taxon>Euarchontoglires</taxon>
        <taxon>Glires</taxon>
        <taxon>Rodentia</taxon>
        <taxon>Myomorpha</taxon>
        <taxon>Muroidea</taxon>
        <taxon>Muridae</taxon>
        <taxon>Murinae</taxon>
        <taxon>Rattus</taxon>
    </lineage>
</organism>
<evidence type="ECO:0000255" key="1"/>
<evidence type="ECO:0000256" key="2">
    <source>
        <dbReference type="SAM" id="MobiDB-lite"/>
    </source>
</evidence>
<evidence type="ECO:0000305" key="3"/>
<protein>
    <recommendedName>
        <fullName>Uncharacterized protein C11orf87 homolog</fullName>
    </recommendedName>
</protein>
<reference key="1">
    <citation type="journal article" date="2004" name="Genome Res.">
        <title>The status, quality, and expansion of the NIH full-length cDNA project: the Mammalian Gene Collection (MGC).</title>
        <authorList>
            <consortium name="The MGC Project Team"/>
        </authorList>
    </citation>
    <scope>NUCLEOTIDE SEQUENCE [LARGE SCALE MRNA]</scope>
    <source>
        <tissue>Brain</tissue>
    </source>
</reference>
<keyword id="KW-0325">Glycoprotein</keyword>
<keyword id="KW-0472">Membrane</keyword>
<keyword id="KW-1185">Reference proteome</keyword>
<keyword id="KW-0732">Signal</keyword>
<keyword id="KW-0812">Transmembrane</keyword>
<keyword id="KW-1133">Transmembrane helix</keyword>
<feature type="signal peptide" evidence="1">
    <location>
        <begin position="1"/>
        <end position="23"/>
    </location>
</feature>
<feature type="chain" id="PRO_0000320199" description="Uncharacterized protein C11orf87 homolog">
    <location>
        <begin position="24"/>
        <end position="196"/>
    </location>
</feature>
<feature type="topological domain" description="Extracellular" evidence="1">
    <location>
        <begin position="24"/>
        <end position="60"/>
    </location>
</feature>
<feature type="transmembrane region" description="Helical" evidence="1">
    <location>
        <begin position="61"/>
        <end position="81"/>
    </location>
</feature>
<feature type="topological domain" description="Cytoplasmic" evidence="1">
    <location>
        <begin position="82"/>
        <end position="196"/>
    </location>
</feature>
<feature type="region of interest" description="Disordered" evidence="2">
    <location>
        <begin position="93"/>
        <end position="184"/>
    </location>
</feature>
<feature type="compositionally biased region" description="Basic and acidic residues" evidence="2">
    <location>
        <begin position="95"/>
        <end position="106"/>
    </location>
</feature>
<feature type="compositionally biased region" description="Basic and acidic residues" evidence="2">
    <location>
        <begin position="124"/>
        <end position="135"/>
    </location>
</feature>
<feature type="compositionally biased region" description="Pro residues" evidence="2">
    <location>
        <begin position="161"/>
        <end position="171"/>
    </location>
</feature>
<feature type="compositionally biased region" description="Low complexity" evidence="2">
    <location>
        <begin position="172"/>
        <end position="181"/>
    </location>
</feature>
<feature type="glycosylation site" description="N-linked (GlcNAc...) asparagine" evidence="1">
    <location>
        <position position="19"/>
    </location>
</feature>
<feature type="glycosylation site" description="N-linked (GlcNAc...) asparagine" evidence="1">
    <location>
        <position position="26"/>
    </location>
</feature>
<comment type="subcellular location">
    <subcellularLocation>
        <location evidence="3">Membrane</location>
        <topology evidence="3">Single-pass type I membrane protein</topology>
    </subcellularLocation>
</comment>
<name>CK087_RAT</name>